<keyword id="KW-0067">ATP-binding</keyword>
<keyword id="KW-0173">Coenzyme A biosynthesis</keyword>
<keyword id="KW-0963">Cytoplasm</keyword>
<keyword id="KW-0460">Magnesium</keyword>
<keyword id="KW-0547">Nucleotide-binding</keyword>
<keyword id="KW-0548">Nucleotidyltransferase</keyword>
<keyword id="KW-0808">Transferase</keyword>
<sequence length="163" mass="18007">MHTRAIYPGTFDPITNGHVDLIERAAKLFKHVTIGIAANPSKQPRFTLEERVELVNRVTAHLDNVEVVGFSGLLVDFAKEQKASVLVRGLRAVSDFEYEFQLANMNRRLSPDLESVFLTPAEENSFISSTLVKEVALHGGDVSQFVHPEVTAALAAKLKLVKP</sequence>
<name>COAD_SHESW</name>
<gene>
    <name evidence="1" type="primary">coaD</name>
    <name type="ordered locus">Sputw3181_0060</name>
</gene>
<organism>
    <name type="scientific">Shewanella sp. (strain W3-18-1)</name>
    <dbReference type="NCBI Taxonomy" id="351745"/>
    <lineage>
        <taxon>Bacteria</taxon>
        <taxon>Pseudomonadati</taxon>
        <taxon>Pseudomonadota</taxon>
        <taxon>Gammaproteobacteria</taxon>
        <taxon>Alteromonadales</taxon>
        <taxon>Shewanellaceae</taxon>
        <taxon>Shewanella</taxon>
    </lineage>
</organism>
<dbReference type="EC" id="2.7.7.3" evidence="1"/>
<dbReference type="EMBL" id="CP000503">
    <property type="protein sequence ID" value="ABM22913.1"/>
    <property type="molecule type" value="Genomic_DNA"/>
</dbReference>
<dbReference type="RefSeq" id="WP_011787480.1">
    <property type="nucleotide sequence ID" value="NC_008750.1"/>
</dbReference>
<dbReference type="SMR" id="A1RE18"/>
<dbReference type="KEGG" id="shw:Sputw3181_0060"/>
<dbReference type="HOGENOM" id="CLU_100149_0_1_6"/>
<dbReference type="UniPathway" id="UPA00241">
    <property type="reaction ID" value="UER00355"/>
</dbReference>
<dbReference type="Proteomes" id="UP000002597">
    <property type="component" value="Chromosome"/>
</dbReference>
<dbReference type="GO" id="GO:0005737">
    <property type="term" value="C:cytoplasm"/>
    <property type="evidence" value="ECO:0007669"/>
    <property type="project" value="UniProtKB-SubCell"/>
</dbReference>
<dbReference type="GO" id="GO:0005524">
    <property type="term" value="F:ATP binding"/>
    <property type="evidence" value="ECO:0007669"/>
    <property type="project" value="UniProtKB-KW"/>
</dbReference>
<dbReference type="GO" id="GO:0004595">
    <property type="term" value="F:pantetheine-phosphate adenylyltransferase activity"/>
    <property type="evidence" value="ECO:0007669"/>
    <property type="project" value="UniProtKB-UniRule"/>
</dbReference>
<dbReference type="GO" id="GO:0015937">
    <property type="term" value="P:coenzyme A biosynthetic process"/>
    <property type="evidence" value="ECO:0007669"/>
    <property type="project" value="UniProtKB-UniRule"/>
</dbReference>
<dbReference type="CDD" id="cd02163">
    <property type="entry name" value="PPAT"/>
    <property type="match status" value="1"/>
</dbReference>
<dbReference type="FunFam" id="3.40.50.620:FF:000012">
    <property type="entry name" value="Phosphopantetheine adenylyltransferase"/>
    <property type="match status" value="1"/>
</dbReference>
<dbReference type="Gene3D" id="3.40.50.620">
    <property type="entry name" value="HUPs"/>
    <property type="match status" value="1"/>
</dbReference>
<dbReference type="HAMAP" id="MF_00151">
    <property type="entry name" value="PPAT_bact"/>
    <property type="match status" value="1"/>
</dbReference>
<dbReference type="InterPro" id="IPR004821">
    <property type="entry name" value="Cyt_trans-like"/>
</dbReference>
<dbReference type="InterPro" id="IPR001980">
    <property type="entry name" value="PPAT"/>
</dbReference>
<dbReference type="InterPro" id="IPR014729">
    <property type="entry name" value="Rossmann-like_a/b/a_fold"/>
</dbReference>
<dbReference type="NCBIfam" id="TIGR01510">
    <property type="entry name" value="coaD_prev_kdtB"/>
    <property type="match status" value="1"/>
</dbReference>
<dbReference type="NCBIfam" id="TIGR00125">
    <property type="entry name" value="cyt_tran_rel"/>
    <property type="match status" value="1"/>
</dbReference>
<dbReference type="PANTHER" id="PTHR21342">
    <property type="entry name" value="PHOSPHOPANTETHEINE ADENYLYLTRANSFERASE"/>
    <property type="match status" value="1"/>
</dbReference>
<dbReference type="PANTHER" id="PTHR21342:SF1">
    <property type="entry name" value="PHOSPHOPANTETHEINE ADENYLYLTRANSFERASE"/>
    <property type="match status" value="1"/>
</dbReference>
<dbReference type="Pfam" id="PF01467">
    <property type="entry name" value="CTP_transf_like"/>
    <property type="match status" value="1"/>
</dbReference>
<dbReference type="PRINTS" id="PR01020">
    <property type="entry name" value="LPSBIOSNTHSS"/>
</dbReference>
<dbReference type="SUPFAM" id="SSF52374">
    <property type="entry name" value="Nucleotidylyl transferase"/>
    <property type="match status" value="1"/>
</dbReference>
<reference key="1">
    <citation type="submission" date="2006-12" db="EMBL/GenBank/DDBJ databases">
        <title>Complete sequence of Shewanella sp. W3-18-1.</title>
        <authorList>
            <consortium name="US DOE Joint Genome Institute"/>
            <person name="Copeland A."/>
            <person name="Lucas S."/>
            <person name="Lapidus A."/>
            <person name="Barry K."/>
            <person name="Detter J.C."/>
            <person name="Glavina del Rio T."/>
            <person name="Hammon N."/>
            <person name="Israni S."/>
            <person name="Dalin E."/>
            <person name="Tice H."/>
            <person name="Pitluck S."/>
            <person name="Chain P."/>
            <person name="Malfatti S."/>
            <person name="Shin M."/>
            <person name="Vergez L."/>
            <person name="Schmutz J."/>
            <person name="Larimer F."/>
            <person name="Land M."/>
            <person name="Hauser L."/>
            <person name="Kyrpides N."/>
            <person name="Lykidis A."/>
            <person name="Tiedje J."/>
            <person name="Richardson P."/>
        </authorList>
    </citation>
    <scope>NUCLEOTIDE SEQUENCE [LARGE SCALE GENOMIC DNA]</scope>
    <source>
        <strain>W3-18-1</strain>
    </source>
</reference>
<protein>
    <recommendedName>
        <fullName evidence="1">Phosphopantetheine adenylyltransferase</fullName>
        <ecNumber evidence="1">2.7.7.3</ecNumber>
    </recommendedName>
    <alternativeName>
        <fullName evidence="1">Dephospho-CoA pyrophosphorylase</fullName>
    </alternativeName>
    <alternativeName>
        <fullName evidence="1">Pantetheine-phosphate adenylyltransferase</fullName>
        <shortName evidence="1">PPAT</shortName>
    </alternativeName>
</protein>
<evidence type="ECO:0000255" key="1">
    <source>
        <dbReference type="HAMAP-Rule" id="MF_00151"/>
    </source>
</evidence>
<comment type="function">
    <text evidence="1">Reversibly transfers an adenylyl group from ATP to 4'-phosphopantetheine, yielding dephospho-CoA (dPCoA) and pyrophosphate.</text>
</comment>
<comment type="catalytic activity">
    <reaction evidence="1">
        <text>(R)-4'-phosphopantetheine + ATP + H(+) = 3'-dephospho-CoA + diphosphate</text>
        <dbReference type="Rhea" id="RHEA:19801"/>
        <dbReference type="ChEBI" id="CHEBI:15378"/>
        <dbReference type="ChEBI" id="CHEBI:30616"/>
        <dbReference type="ChEBI" id="CHEBI:33019"/>
        <dbReference type="ChEBI" id="CHEBI:57328"/>
        <dbReference type="ChEBI" id="CHEBI:61723"/>
        <dbReference type="EC" id="2.7.7.3"/>
    </reaction>
</comment>
<comment type="cofactor">
    <cofactor evidence="1">
        <name>Mg(2+)</name>
        <dbReference type="ChEBI" id="CHEBI:18420"/>
    </cofactor>
</comment>
<comment type="pathway">
    <text evidence="1">Cofactor biosynthesis; coenzyme A biosynthesis; CoA from (R)-pantothenate: step 4/5.</text>
</comment>
<comment type="subunit">
    <text evidence="1">Homohexamer.</text>
</comment>
<comment type="subcellular location">
    <subcellularLocation>
        <location evidence="1">Cytoplasm</location>
    </subcellularLocation>
</comment>
<comment type="similarity">
    <text evidence="1">Belongs to the bacterial CoaD family.</text>
</comment>
<proteinExistence type="inferred from homology"/>
<accession>A1RE18</accession>
<feature type="chain" id="PRO_1000011237" description="Phosphopantetheine adenylyltransferase">
    <location>
        <begin position="1"/>
        <end position="163"/>
    </location>
</feature>
<feature type="binding site" evidence="1">
    <location>
        <begin position="10"/>
        <end position="11"/>
    </location>
    <ligand>
        <name>ATP</name>
        <dbReference type="ChEBI" id="CHEBI:30616"/>
    </ligand>
</feature>
<feature type="binding site" evidence="1">
    <location>
        <position position="10"/>
    </location>
    <ligand>
        <name>substrate</name>
    </ligand>
</feature>
<feature type="binding site" evidence="1">
    <location>
        <position position="18"/>
    </location>
    <ligand>
        <name>ATP</name>
        <dbReference type="ChEBI" id="CHEBI:30616"/>
    </ligand>
</feature>
<feature type="binding site" evidence="1">
    <location>
        <position position="42"/>
    </location>
    <ligand>
        <name>substrate</name>
    </ligand>
</feature>
<feature type="binding site" evidence="1">
    <location>
        <position position="74"/>
    </location>
    <ligand>
        <name>substrate</name>
    </ligand>
</feature>
<feature type="binding site" evidence="1">
    <location>
        <position position="88"/>
    </location>
    <ligand>
        <name>substrate</name>
    </ligand>
</feature>
<feature type="binding site" evidence="1">
    <location>
        <begin position="89"/>
        <end position="91"/>
    </location>
    <ligand>
        <name>ATP</name>
        <dbReference type="ChEBI" id="CHEBI:30616"/>
    </ligand>
</feature>
<feature type="binding site" evidence="1">
    <location>
        <position position="99"/>
    </location>
    <ligand>
        <name>ATP</name>
        <dbReference type="ChEBI" id="CHEBI:30616"/>
    </ligand>
</feature>
<feature type="binding site" evidence="1">
    <location>
        <begin position="124"/>
        <end position="130"/>
    </location>
    <ligand>
        <name>ATP</name>
        <dbReference type="ChEBI" id="CHEBI:30616"/>
    </ligand>
</feature>
<feature type="site" description="Transition state stabilizer" evidence="1">
    <location>
        <position position="18"/>
    </location>
</feature>